<protein>
    <recommendedName>
        <fullName evidence="1">Large ribosomal subunit protein bL21</fullName>
    </recommendedName>
    <alternativeName>
        <fullName evidence="2">50S ribosomal protein L21</fullName>
    </alternativeName>
</protein>
<comment type="function">
    <text evidence="1">This protein binds to 23S rRNA in the presence of protein L20.</text>
</comment>
<comment type="subunit">
    <text evidence="1">Part of the 50S ribosomal subunit. Contacts protein L20.</text>
</comment>
<comment type="similarity">
    <text evidence="1">Belongs to the bacterial ribosomal protein bL21 family.</text>
</comment>
<proteinExistence type="inferred from homology"/>
<name>RL21_PSYIN</name>
<dbReference type="EMBL" id="CP000510">
    <property type="protein sequence ID" value="ABM02379.1"/>
    <property type="molecule type" value="Genomic_DNA"/>
</dbReference>
<dbReference type="RefSeq" id="WP_011768938.1">
    <property type="nucleotide sequence ID" value="NC_008709.1"/>
</dbReference>
<dbReference type="SMR" id="A1SSB4"/>
<dbReference type="STRING" id="357804.Ping_0525"/>
<dbReference type="KEGG" id="pin:Ping_0525"/>
<dbReference type="eggNOG" id="COG0261">
    <property type="taxonomic scope" value="Bacteria"/>
</dbReference>
<dbReference type="HOGENOM" id="CLU_061463_3_2_6"/>
<dbReference type="OrthoDB" id="9813334at2"/>
<dbReference type="Proteomes" id="UP000000639">
    <property type="component" value="Chromosome"/>
</dbReference>
<dbReference type="GO" id="GO:0005737">
    <property type="term" value="C:cytoplasm"/>
    <property type="evidence" value="ECO:0007669"/>
    <property type="project" value="UniProtKB-ARBA"/>
</dbReference>
<dbReference type="GO" id="GO:1990904">
    <property type="term" value="C:ribonucleoprotein complex"/>
    <property type="evidence" value="ECO:0007669"/>
    <property type="project" value="UniProtKB-KW"/>
</dbReference>
<dbReference type="GO" id="GO:0005840">
    <property type="term" value="C:ribosome"/>
    <property type="evidence" value="ECO:0007669"/>
    <property type="project" value="UniProtKB-KW"/>
</dbReference>
<dbReference type="GO" id="GO:0019843">
    <property type="term" value="F:rRNA binding"/>
    <property type="evidence" value="ECO:0007669"/>
    <property type="project" value="UniProtKB-UniRule"/>
</dbReference>
<dbReference type="GO" id="GO:0003735">
    <property type="term" value="F:structural constituent of ribosome"/>
    <property type="evidence" value="ECO:0007669"/>
    <property type="project" value="InterPro"/>
</dbReference>
<dbReference type="GO" id="GO:0006412">
    <property type="term" value="P:translation"/>
    <property type="evidence" value="ECO:0007669"/>
    <property type="project" value="UniProtKB-UniRule"/>
</dbReference>
<dbReference type="HAMAP" id="MF_01363">
    <property type="entry name" value="Ribosomal_bL21"/>
    <property type="match status" value="1"/>
</dbReference>
<dbReference type="InterPro" id="IPR028909">
    <property type="entry name" value="bL21-like"/>
</dbReference>
<dbReference type="InterPro" id="IPR036164">
    <property type="entry name" value="bL21-like_sf"/>
</dbReference>
<dbReference type="InterPro" id="IPR001787">
    <property type="entry name" value="Ribosomal_bL21"/>
</dbReference>
<dbReference type="InterPro" id="IPR018258">
    <property type="entry name" value="Ribosomal_bL21_CS"/>
</dbReference>
<dbReference type="NCBIfam" id="TIGR00061">
    <property type="entry name" value="L21"/>
    <property type="match status" value="1"/>
</dbReference>
<dbReference type="PANTHER" id="PTHR21349">
    <property type="entry name" value="50S RIBOSOMAL PROTEIN L21"/>
    <property type="match status" value="1"/>
</dbReference>
<dbReference type="PANTHER" id="PTHR21349:SF0">
    <property type="entry name" value="LARGE RIBOSOMAL SUBUNIT PROTEIN BL21M"/>
    <property type="match status" value="1"/>
</dbReference>
<dbReference type="Pfam" id="PF00829">
    <property type="entry name" value="Ribosomal_L21p"/>
    <property type="match status" value="1"/>
</dbReference>
<dbReference type="SUPFAM" id="SSF141091">
    <property type="entry name" value="L21p-like"/>
    <property type="match status" value="1"/>
</dbReference>
<dbReference type="PROSITE" id="PS01169">
    <property type="entry name" value="RIBOSOMAL_L21"/>
    <property type="match status" value="1"/>
</dbReference>
<reference key="1">
    <citation type="journal article" date="2008" name="BMC Genomics">
        <title>Genomics of an extreme psychrophile, Psychromonas ingrahamii.</title>
        <authorList>
            <person name="Riley M."/>
            <person name="Staley J.T."/>
            <person name="Danchin A."/>
            <person name="Wang T.Z."/>
            <person name="Brettin T.S."/>
            <person name="Hauser L.J."/>
            <person name="Land M.L."/>
            <person name="Thompson L.S."/>
        </authorList>
    </citation>
    <scope>NUCLEOTIDE SEQUENCE [LARGE SCALE GENOMIC DNA]</scope>
    <source>
        <strain>DSM 17664 / CCUG 51855 / 37</strain>
    </source>
</reference>
<sequence>MYAVIQSGGKQHRVAVEQTLRLEKLDVEAGETIEFDKVLLVANAEDVKVGIPYVEGSKVTAEVVAHGRGNKIKIVKFRRRKHSRTTAGHRQWFTEVKITAINA</sequence>
<accession>A1SSB4</accession>
<evidence type="ECO:0000255" key="1">
    <source>
        <dbReference type="HAMAP-Rule" id="MF_01363"/>
    </source>
</evidence>
<evidence type="ECO:0000305" key="2"/>
<organism>
    <name type="scientific">Psychromonas ingrahamii (strain DSM 17664 / CCUG 51855 / 37)</name>
    <dbReference type="NCBI Taxonomy" id="357804"/>
    <lineage>
        <taxon>Bacteria</taxon>
        <taxon>Pseudomonadati</taxon>
        <taxon>Pseudomonadota</taxon>
        <taxon>Gammaproteobacteria</taxon>
        <taxon>Alteromonadales</taxon>
        <taxon>Psychromonadaceae</taxon>
        <taxon>Psychromonas</taxon>
    </lineage>
</organism>
<feature type="chain" id="PRO_1000067881" description="Large ribosomal subunit protein bL21">
    <location>
        <begin position="1"/>
        <end position="103"/>
    </location>
</feature>
<keyword id="KW-1185">Reference proteome</keyword>
<keyword id="KW-0687">Ribonucleoprotein</keyword>
<keyword id="KW-0689">Ribosomal protein</keyword>
<keyword id="KW-0694">RNA-binding</keyword>
<keyword id="KW-0699">rRNA-binding</keyword>
<gene>
    <name evidence="1" type="primary">rplU</name>
    <name type="ordered locus">Ping_0525</name>
</gene>